<feature type="chain" id="PRO_0000413187" description="Modulator protein MzrA">
    <location>
        <begin position="1"/>
        <end position="130"/>
    </location>
</feature>
<feature type="topological domain" description="Cytoplasmic" evidence="1">
    <location>
        <begin position="1"/>
        <end position="15"/>
    </location>
</feature>
<feature type="transmembrane region" description="Helical" evidence="1">
    <location>
        <begin position="16"/>
        <end position="36"/>
    </location>
</feature>
<feature type="topological domain" description="Periplasmic" evidence="1">
    <location>
        <begin position="37"/>
        <end position="130"/>
    </location>
</feature>
<gene>
    <name evidence="1" type="primary">mzrA</name>
    <name type="ordered locus">ETA_29070</name>
</gene>
<keyword id="KW-0997">Cell inner membrane</keyword>
<keyword id="KW-1003">Cell membrane</keyword>
<keyword id="KW-0472">Membrane</keyword>
<keyword id="KW-1185">Reference proteome</keyword>
<keyword id="KW-0812">Transmembrane</keyword>
<keyword id="KW-1133">Transmembrane helix</keyword>
<sequence>MIAAFIKRHAPQRRLSLWLALPVVALLALVMMPALFRHDSALQIRASRQGASLPDGFYVYQTLSAQGIHIKSITPEQNSLVIRFDSQEQSYAAERVLRELLAQDFDIAHHHNQSATGWINRISFKPQSIG</sequence>
<proteinExistence type="inferred from homology"/>
<protein>
    <recommendedName>
        <fullName evidence="1">Modulator protein MzrA</fullName>
    </recommendedName>
</protein>
<reference key="1">
    <citation type="journal article" date="2008" name="Environ. Microbiol.">
        <title>The genome of Erwinia tasmaniensis strain Et1/99, a non-pathogenic bacterium in the genus Erwinia.</title>
        <authorList>
            <person name="Kube M."/>
            <person name="Migdoll A.M."/>
            <person name="Mueller I."/>
            <person name="Kuhl H."/>
            <person name="Beck A."/>
            <person name="Reinhardt R."/>
            <person name="Geider K."/>
        </authorList>
    </citation>
    <scope>NUCLEOTIDE SEQUENCE [LARGE SCALE GENOMIC DNA]</scope>
    <source>
        <strain>DSM 17950 / CFBP 7177 / CIP 109463 / NCPPB 4357 / Et1/99</strain>
    </source>
</reference>
<accession>B2VDB4</accession>
<evidence type="ECO:0000255" key="1">
    <source>
        <dbReference type="HAMAP-Rule" id="MF_00904"/>
    </source>
</evidence>
<comment type="function">
    <text evidence="1">Modulates the activity of the EnvZ/OmpR two-component regulatory system, probably by directly modulating EnvZ enzymatic activity and increasing stability of phosphorylated OmpR.</text>
</comment>
<comment type="subunit">
    <text evidence="1">Interacts with EnvZ.</text>
</comment>
<comment type="subcellular location">
    <subcellularLocation>
        <location evidence="1">Cell inner membrane</location>
        <topology evidence="1">Single-pass membrane protein</topology>
    </subcellularLocation>
</comment>
<comment type="similarity">
    <text evidence="1">Belongs to the MzrA family.</text>
</comment>
<dbReference type="EMBL" id="CU468135">
    <property type="protein sequence ID" value="CAO97953.1"/>
    <property type="molecule type" value="Genomic_DNA"/>
</dbReference>
<dbReference type="RefSeq" id="WP_012442607.1">
    <property type="nucleotide sequence ID" value="NC_010694.1"/>
</dbReference>
<dbReference type="SMR" id="B2VDB4"/>
<dbReference type="STRING" id="465817.ETA_29070"/>
<dbReference type="KEGG" id="eta:ETA_29070"/>
<dbReference type="eggNOG" id="COG0342">
    <property type="taxonomic scope" value="Bacteria"/>
</dbReference>
<dbReference type="HOGENOM" id="CLU_153761_1_0_6"/>
<dbReference type="OrthoDB" id="6414235at2"/>
<dbReference type="Proteomes" id="UP000001726">
    <property type="component" value="Chromosome"/>
</dbReference>
<dbReference type="GO" id="GO:0005886">
    <property type="term" value="C:plasma membrane"/>
    <property type="evidence" value="ECO:0007669"/>
    <property type="project" value="UniProtKB-SubCell"/>
</dbReference>
<dbReference type="GO" id="GO:0019901">
    <property type="term" value="F:protein kinase binding"/>
    <property type="evidence" value="ECO:0007669"/>
    <property type="project" value="UniProtKB-UniRule"/>
</dbReference>
<dbReference type="Gene3D" id="3.30.70.260">
    <property type="match status" value="1"/>
</dbReference>
<dbReference type="HAMAP" id="MF_00904">
    <property type="entry name" value="Modulator_MzrA"/>
    <property type="match status" value="1"/>
</dbReference>
<dbReference type="InterPro" id="IPR026574">
    <property type="entry name" value="Modulator_MzrA"/>
</dbReference>
<dbReference type="InterPro" id="IPR027398">
    <property type="entry name" value="SecD-TM"/>
</dbReference>
<dbReference type="NCBIfam" id="NF007915">
    <property type="entry name" value="PRK10629.1"/>
    <property type="match status" value="1"/>
</dbReference>
<dbReference type="Pfam" id="PF13721">
    <property type="entry name" value="SecD-TM1"/>
    <property type="match status" value="1"/>
</dbReference>
<organism>
    <name type="scientific">Erwinia tasmaniensis (strain DSM 17950 / CFBP 7177 / CIP 109463 / NCPPB 4357 / Et1/99)</name>
    <dbReference type="NCBI Taxonomy" id="465817"/>
    <lineage>
        <taxon>Bacteria</taxon>
        <taxon>Pseudomonadati</taxon>
        <taxon>Pseudomonadota</taxon>
        <taxon>Gammaproteobacteria</taxon>
        <taxon>Enterobacterales</taxon>
        <taxon>Erwiniaceae</taxon>
        <taxon>Erwinia</taxon>
    </lineage>
</organism>
<name>MZRA_ERWT9</name>